<name>PROB_METFK</name>
<accession>Q1GZ54</accession>
<proteinExistence type="inferred from homology"/>
<sequence length="372" mass="39486">MTSLLLNAKCLVVKVGSSLVTNNGAGLDKGAIAAWADQIARLVKSGRQVVLVSSGAVAEGMQRLGWKKRPVAINELQAAAAVGQMGLVQMYESCFASHGLHTAQILLTHADLADRKRYLNARTTLRTLLDLGVIPIINENDTVVTDEIRFGDNDTLGSLVANLIEADALVILTDQPGLYSADPRKHPDAQFIQYETAGNPALEKMAGGAGTLIGSGGMLTKILAAKRAARSGAHTVIASGREPDILVRLAQGEVVGTHLKAGQVKTLARKQWLADQLRVAGKVVVDEGAAKALREGGRSLLPIGVMAVEGSFERGEVVSCVNTAGEEIARGLVNYSALETARILRQPSHEIEHILGYIDGPELIHRDNLILV</sequence>
<reference key="1">
    <citation type="submission" date="2006-03" db="EMBL/GenBank/DDBJ databases">
        <title>Complete sequence of Methylobacillus flagellatus KT.</title>
        <authorList>
            <consortium name="US DOE Joint Genome Institute"/>
            <person name="Copeland A."/>
            <person name="Lucas S."/>
            <person name="Lapidus A."/>
            <person name="Barry K."/>
            <person name="Detter J.C."/>
            <person name="Glavina del Rio T."/>
            <person name="Hammon N."/>
            <person name="Israni S."/>
            <person name="Dalin E."/>
            <person name="Tice H."/>
            <person name="Pitluck S."/>
            <person name="Brettin T."/>
            <person name="Bruce D."/>
            <person name="Han C."/>
            <person name="Tapia R."/>
            <person name="Saunders E."/>
            <person name="Gilna P."/>
            <person name="Schmutz J."/>
            <person name="Larimer F."/>
            <person name="Land M."/>
            <person name="Kyrpides N."/>
            <person name="Anderson I."/>
            <person name="Richardson P."/>
        </authorList>
    </citation>
    <scope>NUCLEOTIDE SEQUENCE [LARGE SCALE GENOMIC DNA]</scope>
    <source>
        <strain>ATCC 51484 / DSM 6875 / VKM B-1610 / KT</strain>
    </source>
</reference>
<organism>
    <name type="scientific">Methylobacillus flagellatus (strain ATCC 51484 / DSM 6875 / VKM B-1610 / KT)</name>
    <dbReference type="NCBI Taxonomy" id="265072"/>
    <lineage>
        <taxon>Bacteria</taxon>
        <taxon>Pseudomonadati</taxon>
        <taxon>Pseudomonadota</taxon>
        <taxon>Betaproteobacteria</taxon>
        <taxon>Nitrosomonadales</taxon>
        <taxon>Methylophilaceae</taxon>
        <taxon>Methylobacillus</taxon>
    </lineage>
</organism>
<protein>
    <recommendedName>
        <fullName evidence="1">Glutamate 5-kinase</fullName>
        <ecNumber evidence="1">2.7.2.11</ecNumber>
    </recommendedName>
    <alternativeName>
        <fullName evidence="1">Gamma-glutamyl kinase</fullName>
        <shortName evidence="1">GK</shortName>
    </alternativeName>
</protein>
<feature type="chain" id="PRO_0000252986" description="Glutamate 5-kinase">
    <location>
        <begin position="1"/>
        <end position="372"/>
    </location>
</feature>
<feature type="domain" description="PUA" evidence="1">
    <location>
        <begin position="280"/>
        <end position="358"/>
    </location>
</feature>
<feature type="binding site" evidence="1">
    <location>
        <position position="14"/>
    </location>
    <ligand>
        <name>ATP</name>
        <dbReference type="ChEBI" id="CHEBI:30616"/>
    </ligand>
</feature>
<feature type="binding site" evidence="1">
    <location>
        <position position="54"/>
    </location>
    <ligand>
        <name>substrate</name>
    </ligand>
</feature>
<feature type="binding site" evidence="1">
    <location>
        <position position="141"/>
    </location>
    <ligand>
        <name>substrate</name>
    </ligand>
</feature>
<feature type="binding site" evidence="1">
    <location>
        <position position="153"/>
    </location>
    <ligand>
        <name>substrate</name>
    </ligand>
</feature>
<feature type="binding site" evidence="1">
    <location>
        <begin position="173"/>
        <end position="174"/>
    </location>
    <ligand>
        <name>ATP</name>
        <dbReference type="ChEBI" id="CHEBI:30616"/>
    </ligand>
</feature>
<feature type="binding site" evidence="1">
    <location>
        <begin position="215"/>
        <end position="221"/>
    </location>
    <ligand>
        <name>ATP</name>
        <dbReference type="ChEBI" id="CHEBI:30616"/>
    </ligand>
</feature>
<gene>
    <name evidence="1" type="primary">proB</name>
    <name type="ordered locus">Mfla_2216</name>
</gene>
<keyword id="KW-0028">Amino-acid biosynthesis</keyword>
<keyword id="KW-0067">ATP-binding</keyword>
<keyword id="KW-0963">Cytoplasm</keyword>
<keyword id="KW-0418">Kinase</keyword>
<keyword id="KW-0547">Nucleotide-binding</keyword>
<keyword id="KW-0641">Proline biosynthesis</keyword>
<keyword id="KW-1185">Reference proteome</keyword>
<keyword id="KW-0808">Transferase</keyword>
<comment type="function">
    <text evidence="1">Catalyzes the transfer of a phosphate group to glutamate to form L-glutamate 5-phosphate.</text>
</comment>
<comment type="catalytic activity">
    <reaction evidence="1">
        <text>L-glutamate + ATP = L-glutamyl 5-phosphate + ADP</text>
        <dbReference type="Rhea" id="RHEA:14877"/>
        <dbReference type="ChEBI" id="CHEBI:29985"/>
        <dbReference type="ChEBI" id="CHEBI:30616"/>
        <dbReference type="ChEBI" id="CHEBI:58274"/>
        <dbReference type="ChEBI" id="CHEBI:456216"/>
        <dbReference type="EC" id="2.7.2.11"/>
    </reaction>
</comment>
<comment type="pathway">
    <text evidence="1">Amino-acid biosynthesis; L-proline biosynthesis; L-glutamate 5-semialdehyde from L-glutamate: step 1/2.</text>
</comment>
<comment type="subcellular location">
    <subcellularLocation>
        <location evidence="1">Cytoplasm</location>
    </subcellularLocation>
</comment>
<comment type="similarity">
    <text evidence="1">Belongs to the glutamate 5-kinase family.</text>
</comment>
<evidence type="ECO:0000255" key="1">
    <source>
        <dbReference type="HAMAP-Rule" id="MF_00456"/>
    </source>
</evidence>
<dbReference type="EC" id="2.7.2.11" evidence="1"/>
<dbReference type="EMBL" id="CP000284">
    <property type="protein sequence ID" value="ABE50483.1"/>
    <property type="molecule type" value="Genomic_DNA"/>
</dbReference>
<dbReference type="RefSeq" id="WP_011480437.1">
    <property type="nucleotide sequence ID" value="NC_007947.1"/>
</dbReference>
<dbReference type="SMR" id="Q1GZ54"/>
<dbReference type="STRING" id="265072.Mfla_2216"/>
<dbReference type="KEGG" id="mfa:Mfla_2216"/>
<dbReference type="eggNOG" id="COG0263">
    <property type="taxonomic scope" value="Bacteria"/>
</dbReference>
<dbReference type="HOGENOM" id="CLU_025400_2_0_4"/>
<dbReference type="OrthoDB" id="9804434at2"/>
<dbReference type="UniPathway" id="UPA00098">
    <property type="reaction ID" value="UER00359"/>
</dbReference>
<dbReference type="Proteomes" id="UP000002440">
    <property type="component" value="Chromosome"/>
</dbReference>
<dbReference type="GO" id="GO:0005829">
    <property type="term" value="C:cytosol"/>
    <property type="evidence" value="ECO:0007669"/>
    <property type="project" value="TreeGrafter"/>
</dbReference>
<dbReference type="GO" id="GO:0005524">
    <property type="term" value="F:ATP binding"/>
    <property type="evidence" value="ECO:0007669"/>
    <property type="project" value="UniProtKB-KW"/>
</dbReference>
<dbReference type="GO" id="GO:0004349">
    <property type="term" value="F:glutamate 5-kinase activity"/>
    <property type="evidence" value="ECO:0007669"/>
    <property type="project" value="UniProtKB-UniRule"/>
</dbReference>
<dbReference type="GO" id="GO:0003723">
    <property type="term" value="F:RNA binding"/>
    <property type="evidence" value="ECO:0007669"/>
    <property type="project" value="InterPro"/>
</dbReference>
<dbReference type="GO" id="GO:0055129">
    <property type="term" value="P:L-proline biosynthetic process"/>
    <property type="evidence" value="ECO:0007669"/>
    <property type="project" value="UniProtKB-UniRule"/>
</dbReference>
<dbReference type="CDD" id="cd04242">
    <property type="entry name" value="AAK_G5K_ProB"/>
    <property type="match status" value="1"/>
</dbReference>
<dbReference type="CDD" id="cd21157">
    <property type="entry name" value="PUA_G5K"/>
    <property type="match status" value="1"/>
</dbReference>
<dbReference type="FunFam" id="2.30.130.10:FF:000007">
    <property type="entry name" value="Glutamate 5-kinase"/>
    <property type="match status" value="1"/>
</dbReference>
<dbReference type="FunFam" id="3.40.1160.10:FF:000018">
    <property type="entry name" value="Glutamate 5-kinase"/>
    <property type="match status" value="1"/>
</dbReference>
<dbReference type="Gene3D" id="3.40.1160.10">
    <property type="entry name" value="Acetylglutamate kinase-like"/>
    <property type="match status" value="1"/>
</dbReference>
<dbReference type="Gene3D" id="2.30.130.10">
    <property type="entry name" value="PUA domain"/>
    <property type="match status" value="1"/>
</dbReference>
<dbReference type="HAMAP" id="MF_00456">
    <property type="entry name" value="ProB"/>
    <property type="match status" value="1"/>
</dbReference>
<dbReference type="InterPro" id="IPR036393">
    <property type="entry name" value="AceGlu_kinase-like_sf"/>
</dbReference>
<dbReference type="InterPro" id="IPR001048">
    <property type="entry name" value="Asp/Glu/Uridylate_kinase"/>
</dbReference>
<dbReference type="InterPro" id="IPR041739">
    <property type="entry name" value="G5K_ProB"/>
</dbReference>
<dbReference type="InterPro" id="IPR001057">
    <property type="entry name" value="Glu/AcGlu_kinase"/>
</dbReference>
<dbReference type="InterPro" id="IPR011529">
    <property type="entry name" value="Glu_5kinase"/>
</dbReference>
<dbReference type="InterPro" id="IPR005715">
    <property type="entry name" value="Glu_5kinase/COase_Synthase"/>
</dbReference>
<dbReference type="InterPro" id="IPR019797">
    <property type="entry name" value="Glutamate_5-kinase_CS"/>
</dbReference>
<dbReference type="InterPro" id="IPR002478">
    <property type="entry name" value="PUA"/>
</dbReference>
<dbReference type="InterPro" id="IPR015947">
    <property type="entry name" value="PUA-like_sf"/>
</dbReference>
<dbReference type="InterPro" id="IPR036974">
    <property type="entry name" value="PUA_sf"/>
</dbReference>
<dbReference type="NCBIfam" id="TIGR01027">
    <property type="entry name" value="proB"/>
    <property type="match status" value="1"/>
</dbReference>
<dbReference type="PANTHER" id="PTHR43654">
    <property type="entry name" value="GLUTAMATE 5-KINASE"/>
    <property type="match status" value="1"/>
</dbReference>
<dbReference type="PANTHER" id="PTHR43654:SF1">
    <property type="entry name" value="ISOPENTENYL PHOSPHATE KINASE"/>
    <property type="match status" value="1"/>
</dbReference>
<dbReference type="Pfam" id="PF00696">
    <property type="entry name" value="AA_kinase"/>
    <property type="match status" value="1"/>
</dbReference>
<dbReference type="Pfam" id="PF01472">
    <property type="entry name" value="PUA"/>
    <property type="match status" value="1"/>
</dbReference>
<dbReference type="PIRSF" id="PIRSF000729">
    <property type="entry name" value="GK"/>
    <property type="match status" value="1"/>
</dbReference>
<dbReference type="PRINTS" id="PR00474">
    <property type="entry name" value="GLU5KINASE"/>
</dbReference>
<dbReference type="SMART" id="SM00359">
    <property type="entry name" value="PUA"/>
    <property type="match status" value="1"/>
</dbReference>
<dbReference type="SUPFAM" id="SSF53633">
    <property type="entry name" value="Carbamate kinase-like"/>
    <property type="match status" value="1"/>
</dbReference>
<dbReference type="SUPFAM" id="SSF88697">
    <property type="entry name" value="PUA domain-like"/>
    <property type="match status" value="1"/>
</dbReference>
<dbReference type="PROSITE" id="PS00902">
    <property type="entry name" value="GLUTAMATE_5_KINASE"/>
    <property type="match status" value="1"/>
</dbReference>
<dbReference type="PROSITE" id="PS50890">
    <property type="entry name" value="PUA"/>
    <property type="match status" value="1"/>
</dbReference>